<organism>
    <name type="scientific">Drosophila melanogaster</name>
    <name type="common">Fruit fly</name>
    <dbReference type="NCBI Taxonomy" id="7227"/>
    <lineage>
        <taxon>Eukaryota</taxon>
        <taxon>Metazoa</taxon>
        <taxon>Ecdysozoa</taxon>
        <taxon>Arthropoda</taxon>
        <taxon>Hexapoda</taxon>
        <taxon>Insecta</taxon>
        <taxon>Pterygota</taxon>
        <taxon>Neoptera</taxon>
        <taxon>Endopterygota</taxon>
        <taxon>Diptera</taxon>
        <taxon>Brachycera</taxon>
        <taxon>Muscomorpha</taxon>
        <taxon>Ephydroidea</taxon>
        <taxon>Drosophilidae</taxon>
        <taxon>Drosophila</taxon>
        <taxon>Sophophora</taxon>
    </lineage>
</organism>
<keyword id="KW-0496">Mitochondrion</keyword>
<keyword id="KW-1185">Reference proteome</keyword>
<keyword id="KW-0687">Ribonucleoprotein</keyword>
<keyword id="KW-0689">Ribosomal protein</keyword>
<keyword id="KW-0809">Transit peptide</keyword>
<proteinExistence type="inferred from homology"/>
<feature type="transit peptide" description="Mitochondrion" evidence="2">
    <location>
        <begin position="1"/>
        <end status="unknown"/>
    </location>
</feature>
<feature type="chain" id="PRO_0000238629" description="Large ribosomal subunit protein bL33m">
    <location>
        <begin status="unknown"/>
        <end position="64"/>
    </location>
</feature>
<sequence length="64" mass="7697">MRLTNVLFKKVKSKRIMVVLESVVSGHQFNAFRDRLADKLEIIRFDPYIQQESLYRERKKIRSA</sequence>
<reference key="1">
    <citation type="journal article" date="2000" name="Science">
        <title>The genome sequence of Drosophila melanogaster.</title>
        <authorList>
            <person name="Adams M.D."/>
            <person name="Celniker S.E."/>
            <person name="Holt R.A."/>
            <person name="Evans C.A."/>
            <person name="Gocayne J.D."/>
            <person name="Amanatides P.G."/>
            <person name="Scherer S.E."/>
            <person name="Li P.W."/>
            <person name="Hoskins R.A."/>
            <person name="Galle R.F."/>
            <person name="George R.A."/>
            <person name="Lewis S.E."/>
            <person name="Richards S."/>
            <person name="Ashburner M."/>
            <person name="Henderson S.N."/>
            <person name="Sutton G.G."/>
            <person name="Wortman J.R."/>
            <person name="Yandell M.D."/>
            <person name="Zhang Q."/>
            <person name="Chen L.X."/>
            <person name="Brandon R.C."/>
            <person name="Rogers Y.-H.C."/>
            <person name="Blazej R.G."/>
            <person name="Champe M."/>
            <person name="Pfeiffer B.D."/>
            <person name="Wan K.H."/>
            <person name="Doyle C."/>
            <person name="Baxter E.G."/>
            <person name="Helt G."/>
            <person name="Nelson C.R."/>
            <person name="Miklos G.L.G."/>
            <person name="Abril J.F."/>
            <person name="Agbayani A."/>
            <person name="An H.-J."/>
            <person name="Andrews-Pfannkoch C."/>
            <person name="Baldwin D."/>
            <person name="Ballew R.M."/>
            <person name="Basu A."/>
            <person name="Baxendale J."/>
            <person name="Bayraktaroglu L."/>
            <person name="Beasley E.M."/>
            <person name="Beeson K.Y."/>
            <person name="Benos P.V."/>
            <person name="Berman B.P."/>
            <person name="Bhandari D."/>
            <person name="Bolshakov S."/>
            <person name="Borkova D."/>
            <person name="Botchan M.R."/>
            <person name="Bouck J."/>
            <person name="Brokstein P."/>
            <person name="Brottier P."/>
            <person name="Burtis K.C."/>
            <person name="Busam D.A."/>
            <person name="Butler H."/>
            <person name="Cadieu E."/>
            <person name="Center A."/>
            <person name="Chandra I."/>
            <person name="Cherry J.M."/>
            <person name="Cawley S."/>
            <person name="Dahlke C."/>
            <person name="Davenport L.B."/>
            <person name="Davies P."/>
            <person name="de Pablos B."/>
            <person name="Delcher A."/>
            <person name="Deng Z."/>
            <person name="Mays A.D."/>
            <person name="Dew I."/>
            <person name="Dietz S.M."/>
            <person name="Dodson K."/>
            <person name="Doup L.E."/>
            <person name="Downes M."/>
            <person name="Dugan-Rocha S."/>
            <person name="Dunkov B.C."/>
            <person name="Dunn P."/>
            <person name="Durbin K.J."/>
            <person name="Evangelista C.C."/>
            <person name="Ferraz C."/>
            <person name="Ferriera S."/>
            <person name="Fleischmann W."/>
            <person name="Fosler C."/>
            <person name="Gabrielian A.E."/>
            <person name="Garg N.S."/>
            <person name="Gelbart W.M."/>
            <person name="Glasser K."/>
            <person name="Glodek A."/>
            <person name="Gong F."/>
            <person name="Gorrell J.H."/>
            <person name="Gu Z."/>
            <person name="Guan P."/>
            <person name="Harris M."/>
            <person name="Harris N.L."/>
            <person name="Harvey D.A."/>
            <person name="Heiman T.J."/>
            <person name="Hernandez J.R."/>
            <person name="Houck J."/>
            <person name="Hostin D."/>
            <person name="Houston K.A."/>
            <person name="Howland T.J."/>
            <person name="Wei M.-H."/>
            <person name="Ibegwam C."/>
            <person name="Jalali M."/>
            <person name="Kalush F."/>
            <person name="Karpen G.H."/>
            <person name="Ke Z."/>
            <person name="Kennison J.A."/>
            <person name="Ketchum K.A."/>
            <person name="Kimmel B.E."/>
            <person name="Kodira C.D."/>
            <person name="Kraft C.L."/>
            <person name="Kravitz S."/>
            <person name="Kulp D."/>
            <person name="Lai Z."/>
            <person name="Lasko P."/>
            <person name="Lei Y."/>
            <person name="Levitsky A.A."/>
            <person name="Li J.H."/>
            <person name="Li Z."/>
            <person name="Liang Y."/>
            <person name="Lin X."/>
            <person name="Liu X."/>
            <person name="Mattei B."/>
            <person name="McIntosh T.C."/>
            <person name="McLeod M.P."/>
            <person name="McPherson D."/>
            <person name="Merkulov G."/>
            <person name="Milshina N.V."/>
            <person name="Mobarry C."/>
            <person name="Morris J."/>
            <person name="Moshrefi A."/>
            <person name="Mount S.M."/>
            <person name="Moy M."/>
            <person name="Murphy B."/>
            <person name="Murphy L."/>
            <person name="Muzny D.M."/>
            <person name="Nelson D.L."/>
            <person name="Nelson D.R."/>
            <person name="Nelson K.A."/>
            <person name="Nixon K."/>
            <person name="Nusskern D.R."/>
            <person name="Pacleb J.M."/>
            <person name="Palazzolo M."/>
            <person name="Pittman G.S."/>
            <person name="Pan S."/>
            <person name="Pollard J."/>
            <person name="Puri V."/>
            <person name="Reese M.G."/>
            <person name="Reinert K."/>
            <person name="Remington K."/>
            <person name="Saunders R.D.C."/>
            <person name="Scheeler F."/>
            <person name="Shen H."/>
            <person name="Shue B.C."/>
            <person name="Siden-Kiamos I."/>
            <person name="Simpson M."/>
            <person name="Skupski M.P."/>
            <person name="Smith T.J."/>
            <person name="Spier E."/>
            <person name="Spradling A.C."/>
            <person name="Stapleton M."/>
            <person name="Strong R."/>
            <person name="Sun E."/>
            <person name="Svirskas R."/>
            <person name="Tector C."/>
            <person name="Turner R."/>
            <person name="Venter E."/>
            <person name="Wang A.H."/>
            <person name="Wang X."/>
            <person name="Wang Z.-Y."/>
            <person name="Wassarman D.A."/>
            <person name="Weinstock G.M."/>
            <person name="Weissenbach J."/>
            <person name="Williams S.M."/>
            <person name="Woodage T."/>
            <person name="Worley K.C."/>
            <person name="Wu D."/>
            <person name="Yang S."/>
            <person name="Yao Q.A."/>
            <person name="Ye J."/>
            <person name="Yeh R.-F."/>
            <person name="Zaveri J.S."/>
            <person name="Zhan M."/>
            <person name="Zhang G."/>
            <person name="Zhao Q."/>
            <person name="Zheng L."/>
            <person name="Zheng X.H."/>
            <person name="Zhong F.N."/>
            <person name="Zhong W."/>
            <person name="Zhou X."/>
            <person name="Zhu S.C."/>
            <person name="Zhu X."/>
            <person name="Smith H.O."/>
            <person name="Gibbs R.A."/>
            <person name="Myers E.W."/>
            <person name="Rubin G.M."/>
            <person name="Venter J.C."/>
        </authorList>
    </citation>
    <scope>NUCLEOTIDE SEQUENCE [LARGE SCALE GENOMIC DNA]</scope>
    <source>
        <strain>Berkeley</strain>
    </source>
</reference>
<reference key="2">
    <citation type="journal article" date="2002" name="Genome Biol.">
        <title>Annotation of the Drosophila melanogaster euchromatic genome: a systematic review.</title>
        <authorList>
            <person name="Misra S."/>
            <person name="Crosby M.A."/>
            <person name="Mungall C.J."/>
            <person name="Matthews B.B."/>
            <person name="Campbell K.S."/>
            <person name="Hradecky P."/>
            <person name="Huang Y."/>
            <person name="Kaminker J.S."/>
            <person name="Millburn G.H."/>
            <person name="Prochnik S.E."/>
            <person name="Smith C.D."/>
            <person name="Tupy J.L."/>
            <person name="Whitfield E.J."/>
            <person name="Bayraktaroglu L."/>
            <person name="Berman B.P."/>
            <person name="Bettencourt B.R."/>
            <person name="Celniker S.E."/>
            <person name="de Grey A.D.N.J."/>
            <person name="Drysdale R.A."/>
            <person name="Harris N.L."/>
            <person name="Richter J."/>
            <person name="Russo S."/>
            <person name="Schroeder A.J."/>
            <person name="Shu S.Q."/>
            <person name="Stapleton M."/>
            <person name="Yamada C."/>
            <person name="Ashburner M."/>
            <person name="Gelbart W.M."/>
            <person name="Rubin G.M."/>
            <person name="Lewis S.E."/>
        </authorList>
    </citation>
    <scope>GENOME REANNOTATION</scope>
    <source>
        <strain>Berkeley</strain>
    </source>
</reference>
<reference key="3">
    <citation type="journal article" date="2002" name="Genome Biol.">
        <title>A Drosophila full-length cDNA resource.</title>
        <authorList>
            <person name="Stapleton M."/>
            <person name="Carlson J.W."/>
            <person name="Brokstein P."/>
            <person name="Yu C."/>
            <person name="Champe M."/>
            <person name="George R.A."/>
            <person name="Guarin H."/>
            <person name="Kronmiller B."/>
            <person name="Pacleb J.M."/>
            <person name="Park S."/>
            <person name="Wan K.H."/>
            <person name="Rubin G.M."/>
            <person name="Celniker S.E."/>
        </authorList>
    </citation>
    <scope>NUCLEOTIDE SEQUENCE [LARGE SCALE MRNA]</scope>
    <source>
        <strain>Berkeley</strain>
        <tissue>Head</tissue>
    </source>
</reference>
<gene>
    <name type="primary">mRpL33</name>
    <name type="ORF">CG3712</name>
</gene>
<name>RM33_DROME</name>
<comment type="subunit">
    <text evidence="1">Component of the mitochondrial ribosome large subunit (39S) which comprises a 16S rRNA and about 50 distinct proteins.</text>
</comment>
<comment type="subcellular location">
    <subcellularLocation>
        <location evidence="1">Mitochondrion</location>
    </subcellularLocation>
</comment>
<comment type="similarity">
    <text evidence="3">Belongs to the bacterial ribosomal protein bL33 family.</text>
</comment>
<dbReference type="EMBL" id="AE014298">
    <property type="protein sequence ID" value="AAF45940.2"/>
    <property type="molecule type" value="Genomic_DNA"/>
</dbReference>
<dbReference type="EMBL" id="AY118791">
    <property type="protein sequence ID" value="AAM50651.1"/>
    <property type="molecule type" value="mRNA"/>
</dbReference>
<dbReference type="RefSeq" id="NP_524981.2">
    <property type="nucleotide sequence ID" value="NM_080242.4"/>
</dbReference>
<dbReference type="SMR" id="Q9W4L1"/>
<dbReference type="BioGRID" id="72664">
    <property type="interactions" value="1"/>
</dbReference>
<dbReference type="FunCoup" id="Q9W4L1">
    <property type="interactions" value="411"/>
</dbReference>
<dbReference type="IntAct" id="Q9W4L1">
    <property type="interactions" value="1"/>
</dbReference>
<dbReference type="STRING" id="7227.FBpp0070623"/>
<dbReference type="PaxDb" id="7227-FBpp0070623"/>
<dbReference type="DNASU" id="50381"/>
<dbReference type="EnsemblMetazoa" id="FBtr0070655">
    <property type="protein sequence ID" value="FBpp0070623"/>
    <property type="gene ID" value="FBgn0040907"/>
</dbReference>
<dbReference type="GeneID" id="50381"/>
<dbReference type="KEGG" id="dme:Dmel_CG3712"/>
<dbReference type="AGR" id="FB:FBgn0040907"/>
<dbReference type="CTD" id="9553"/>
<dbReference type="FlyBase" id="FBgn0040907">
    <property type="gene designation" value="mRpL33"/>
</dbReference>
<dbReference type="VEuPathDB" id="VectorBase:FBgn0040907"/>
<dbReference type="eggNOG" id="ENOG502S7RR">
    <property type="taxonomic scope" value="Eukaryota"/>
</dbReference>
<dbReference type="HOGENOM" id="CLU_190949_2_0_1"/>
<dbReference type="InParanoid" id="Q9W4L1"/>
<dbReference type="OMA" id="NTHAPRF"/>
<dbReference type="OrthoDB" id="275534at2759"/>
<dbReference type="PhylomeDB" id="Q9W4L1"/>
<dbReference type="Reactome" id="R-DME-5389840">
    <property type="pathway name" value="Mitochondrial translation elongation"/>
</dbReference>
<dbReference type="Reactome" id="R-DME-5419276">
    <property type="pathway name" value="Mitochondrial translation termination"/>
</dbReference>
<dbReference type="BioGRID-ORCS" id="50381">
    <property type="hits" value="1 hit in 1 CRISPR screen"/>
</dbReference>
<dbReference type="GenomeRNAi" id="50381"/>
<dbReference type="PRO" id="PR:Q9W4L1"/>
<dbReference type="Proteomes" id="UP000000803">
    <property type="component" value="Chromosome X"/>
</dbReference>
<dbReference type="Bgee" id="FBgn0040907">
    <property type="expression patterns" value="Expressed in adult middle midgut class I enteroendocrine cell in adult midgut (Drosophila) and 159 other cell types or tissues"/>
</dbReference>
<dbReference type="GO" id="GO:0005762">
    <property type="term" value="C:mitochondrial large ribosomal subunit"/>
    <property type="evidence" value="ECO:0000250"/>
    <property type="project" value="UniProtKB"/>
</dbReference>
<dbReference type="GO" id="GO:0005739">
    <property type="term" value="C:mitochondrion"/>
    <property type="evidence" value="ECO:0000250"/>
    <property type="project" value="UniProtKB"/>
</dbReference>
<dbReference type="GO" id="GO:0003735">
    <property type="term" value="F:structural constituent of ribosome"/>
    <property type="evidence" value="ECO:0000250"/>
    <property type="project" value="FlyBase"/>
</dbReference>
<dbReference type="GO" id="GO:0032543">
    <property type="term" value="P:mitochondrial translation"/>
    <property type="evidence" value="ECO:0000304"/>
    <property type="project" value="FlyBase"/>
</dbReference>
<dbReference type="FunFam" id="2.20.28.120:FF:000005">
    <property type="entry name" value="39S ribosomal protein L33, mitochondrial"/>
    <property type="match status" value="1"/>
</dbReference>
<dbReference type="Gene3D" id="2.20.28.120">
    <property type="entry name" value="Ribosomal protein L33"/>
    <property type="match status" value="1"/>
</dbReference>
<dbReference type="InterPro" id="IPR052008">
    <property type="entry name" value="Mitoribosomal_protein_bL33"/>
</dbReference>
<dbReference type="InterPro" id="IPR038584">
    <property type="entry name" value="Ribosomal_bL33_sf"/>
</dbReference>
<dbReference type="InterPro" id="IPR011332">
    <property type="entry name" value="Ribosomal_zn-bd"/>
</dbReference>
<dbReference type="PANTHER" id="PTHR47037">
    <property type="entry name" value="39S RIBOSOMAL PROTEIN L33, MITOCHONDRIAL"/>
    <property type="match status" value="1"/>
</dbReference>
<dbReference type="PANTHER" id="PTHR47037:SF1">
    <property type="entry name" value="LARGE RIBOSOMAL SUBUNIT PROTEIN BL33M"/>
    <property type="match status" value="1"/>
</dbReference>
<dbReference type="SUPFAM" id="SSF57829">
    <property type="entry name" value="Zn-binding ribosomal proteins"/>
    <property type="match status" value="1"/>
</dbReference>
<protein>
    <recommendedName>
        <fullName evidence="3">Large ribosomal subunit protein bL33m</fullName>
    </recommendedName>
    <alternativeName>
        <fullName>39S ribosomal protein L33, mitochondrial</fullName>
        <shortName>L33mt</shortName>
        <shortName>MRP-L33</shortName>
    </alternativeName>
</protein>
<evidence type="ECO:0000250" key="1">
    <source>
        <dbReference type="UniProtKB" id="O75394"/>
    </source>
</evidence>
<evidence type="ECO:0000255" key="2"/>
<evidence type="ECO:0000305" key="3"/>
<accession>Q9W4L1</accession>